<accession>Q6BPW7</accession>
<protein>
    <recommendedName>
        <fullName>Iron-sulfur cluster assembly factor IBA57 homolog, mitochondrial</fullName>
    </recommendedName>
</protein>
<keyword id="KW-0496">Mitochondrion</keyword>
<keyword id="KW-1185">Reference proteome</keyword>
<keyword id="KW-0809">Transit peptide</keyword>
<proteinExistence type="inferred from homology"/>
<organism>
    <name type="scientific">Debaryomyces hansenii (strain ATCC 36239 / CBS 767 / BCRC 21394 / JCM 1990 / NBRC 0083 / IGC 2968)</name>
    <name type="common">Yeast</name>
    <name type="synonym">Torulaspora hansenii</name>
    <dbReference type="NCBI Taxonomy" id="284592"/>
    <lineage>
        <taxon>Eukaryota</taxon>
        <taxon>Fungi</taxon>
        <taxon>Dikarya</taxon>
        <taxon>Ascomycota</taxon>
        <taxon>Saccharomycotina</taxon>
        <taxon>Pichiomycetes</taxon>
        <taxon>Debaryomycetaceae</taxon>
        <taxon>Debaryomyces</taxon>
    </lineage>
</organism>
<evidence type="ECO:0000250" key="1">
    <source>
        <dbReference type="UniProtKB" id="P47158"/>
    </source>
</evidence>
<evidence type="ECO:0000255" key="2"/>
<evidence type="ECO:0000256" key="3">
    <source>
        <dbReference type="SAM" id="MobiDB-lite"/>
    </source>
</evidence>
<evidence type="ECO:0000305" key="4"/>
<sequence length="462" mass="52586">MKIPVSGISALNRSLLQIKGPDATKFLNGLSTSRFLPNIVKKKQHTIDEAENRHAKLSEIININDNWGLMHEDIYDPDNNIFVRRDGLNSMFLSSKGRVVTDCFLYSQPFHNLNGTFEGQISEPTYLIEIDSSFTSQLQMLLKLHKLSAKVSIETIKSMHSYYYYNDTAEFDEYLDFIQQEFFRSRDPVDALNNANSFIKSEVLFNPKLAGNILGFSIDNRIPNFGIKVLMDKEIGDDDNKIPVDDLFSSSFKDNFVVPEILKPESITRRRFMNGLFETQDSPKESSLLPFEMNLDLTNGLSLEKGCYVGQELTIRTYNNGIIRKRIVPIQFFEINDDNLSALDESEYLTLDPNDPVIRELQDLHSSTLSKLEITPLIEKKDSPPPEPEQQSSSPFANSKPVRRRTASSGKLLSIQDNLGFVLANLSDIENVDLYKIELPCLEGGVKHVGIKVFKPEWWPID</sequence>
<reference key="1">
    <citation type="journal article" date="2004" name="Nature">
        <title>Genome evolution in yeasts.</title>
        <authorList>
            <person name="Dujon B."/>
            <person name="Sherman D."/>
            <person name="Fischer G."/>
            <person name="Durrens P."/>
            <person name="Casaregola S."/>
            <person name="Lafontaine I."/>
            <person name="de Montigny J."/>
            <person name="Marck C."/>
            <person name="Neuveglise C."/>
            <person name="Talla E."/>
            <person name="Goffard N."/>
            <person name="Frangeul L."/>
            <person name="Aigle M."/>
            <person name="Anthouard V."/>
            <person name="Babour A."/>
            <person name="Barbe V."/>
            <person name="Barnay S."/>
            <person name="Blanchin S."/>
            <person name="Beckerich J.-M."/>
            <person name="Beyne E."/>
            <person name="Bleykasten C."/>
            <person name="Boisrame A."/>
            <person name="Boyer J."/>
            <person name="Cattolico L."/>
            <person name="Confanioleri F."/>
            <person name="de Daruvar A."/>
            <person name="Despons L."/>
            <person name="Fabre E."/>
            <person name="Fairhead C."/>
            <person name="Ferry-Dumazet H."/>
            <person name="Groppi A."/>
            <person name="Hantraye F."/>
            <person name="Hennequin C."/>
            <person name="Jauniaux N."/>
            <person name="Joyet P."/>
            <person name="Kachouri R."/>
            <person name="Kerrest A."/>
            <person name="Koszul R."/>
            <person name="Lemaire M."/>
            <person name="Lesur I."/>
            <person name="Ma L."/>
            <person name="Muller H."/>
            <person name="Nicaud J.-M."/>
            <person name="Nikolski M."/>
            <person name="Oztas S."/>
            <person name="Ozier-Kalogeropoulos O."/>
            <person name="Pellenz S."/>
            <person name="Potier S."/>
            <person name="Richard G.-F."/>
            <person name="Straub M.-L."/>
            <person name="Suleau A."/>
            <person name="Swennen D."/>
            <person name="Tekaia F."/>
            <person name="Wesolowski-Louvel M."/>
            <person name="Westhof E."/>
            <person name="Wirth B."/>
            <person name="Zeniou-Meyer M."/>
            <person name="Zivanovic Y."/>
            <person name="Bolotin-Fukuhara M."/>
            <person name="Thierry A."/>
            <person name="Bouchier C."/>
            <person name="Caudron B."/>
            <person name="Scarpelli C."/>
            <person name="Gaillardin C."/>
            <person name="Weissenbach J."/>
            <person name="Wincker P."/>
            <person name="Souciet J.-L."/>
        </authorList>
    </citation>
    <scope>NUCLEOTIDE SEQUENCE [LARGE SCALE GENOMIC DNA]</scope>
    <source>
        <strain>ATCC 36239 / CBS 767 / BCRC 21394 / JCM 1990 / NBRC 0083 / IGC 2968</strain>
    </source>
</reference>
<gene>
    <name type="primary">CAF17</name>
    <name type="ordered locus">DEHA2E10318g</name>
</gene>
<comment type="subcellular location">
    <subcellularLocation>
        <location evidence="1">Mitochondrion matrix</location>
    </subcellularLocation>
</comment>
<comment type="similarity">
    <text evidence="4">Belongs to the GcvT family. CAF17/IBA57 subfamily.</text>
</comment>
<name>CAF17_DEBHA</name>
<dbReference type="EMBL" id="CR382137">
    <property type="protein sequence ID" value="CAG87991.2"/>
    <property type="molecule type" value="Genomic_DNA"/>
</dbReference>
<dbReference type="RefSeq" id="XP_459753.2">
    <property type="nucleotide sequence ID" value="XM_459753.1"/>
</dbReference>
<dbReference type="SMR" id="Q6BPW7"/>
<dbReference type="FunCoup" id="Q6BPW7">
    <property type="interactions" value="316"/>
</dbReference>
<dbReference type="STRING" id="284592.Q6BPW7"/>
<dbReference type="GeneID" id="2902320"/>
<dbReference type="KEGG" id="dha:DEHA2E10318g"/>
<dbReference type="VEuPathDB" id="FungiDB:DEHA2E10318g"/>
<dbReference type="eggNOG" id="KOG2929">
    <property type="taxonomic scope" value="Eukaryota"/>
</dbReference>
<dbReference type="HOGENOM" id="CLU_007884_7_3_1"/>
<dbReference type="InParanoid" id="Q6BPW7"/>
<dbReference type="OMA" id="PFECNLD"/>
<dbReference type="OrthoDB" id="191995at2759"/>
<dbReference type="Proteomes" id="UP000000599">
    <property type="component" value="Chromosome E"/>
</dbReference>
<dbReference type="GO" id="GO:0005759">
    <property type="term" value="C:mitochondrial matrix"/>
    <property type="evidence" value="ECO:0007669"/>
    <property type="project" value="TreeGrafter"/>
</dbReference>
<dbReference type="GO" id="GO:0016740">
    <property type="term" value="F:transferase activity"/>
    <property type="evidence" value="ECO:0007669"/>
    <property type="project" value="UniProtKB-KW"/>
</dbReference>
<dbReference type="GO" id="GO:0016226">
    <property type="term" value="P:iron-sulfur cluster assembly"/>
    <property type="evidence" value="ECO:0007669"/>
    <property type="project" value="TreeGrafter"/>
</dbReference>
<dbReference type="Gene3D" id="2.40.30.160">
    <property type="match status" value="1"/>
</dbReference>
<dbReference type="Gene3D" id="3.30.1360.120">
    <property type="entry name" value="Probable tRNA modification gtpase trme, domain 1"/>
    <property type="match status" value="1"/>
</dbReference>
<dbReference type="InterPro" id="IPR027266">
    <property type="entry name" value="TrmE/GcvT_dom1"/>
</dbReference>
<dbReference type="InterPro" id="IPR045179">
    <property type="entry name" value="YgfZ/GcvT"/>
</dbReference>
<dbReference type="InterPro" id="IPR017703">
    <property type="entry name" value="YgfZ/GcvT_CS"/>
</dbReference>
<dbReference type="NCBIfam" id="TIGR03317">
    <property type="entry name" value="ygfZ_signature"/>
    <property type="match status" value="1"/>
</dbReference>
<dbReference type="PANTHER" id="PTHR22602">
    <property type="entry name" value="TRANSFERASE CAF17, MITOCHONDRIAL-RELATED"/>
    <property type="match status" value="1"/>
</dbReference>
<dbReference type="PANTHER" id="PTHR22602:SF0">
    <property type="entry name" value="TRANSFERASE CAF17, MITOCHONDRIAL-RELATED"/>
    <property type="match status" value="1"/>
</dbReference>
<dbReference type="SUPFAM" id="SSF103025">
    <property type="entry name" value="Folate-binding domain"/>
    <property type="match status" value="1"/>
</dbReference>
<feature type="transit peptide" description="Mitochondrion" evidence="2">
    <location>
        <begin position="1"/>
        <end position="43"/>
    </location>
</feature>
<feature type="chain" id="PRO_0000301699" description="Iron-sulfur cluster assembly factor IBA57 homolog, mitochondrial">
    <location>
        <begin position="44"/>
        <end position="462"/>
    </location>
</feature>
<feature type="region of interest" description="Disordered" evidence="3">
    <location>
        <begin position="378"/>
        <end position="402"/>
    </location>
</feature>